<proteinExistence type="predicted"/>
<sequence>MKNKWLSFFSGKVQLELTGRGIERLLNECTRQGIPVFHVKKKKEAVSLYIQLQDVHAFRRVRSKFKCKARFINRKGFPFLLLKSKLNIGFTIGFAIFFILLFLLSNMVWKIDVTGAKPETEHQMRQHLNEIGVKKGRLQFLMMSPEKIQKSLTNGIDNITWVGVDLKGTTIHMKVVEKNEPEKEKYVSPRNIVAKKKATITRMFVQKGQPMAAIHDHVEKGQLLVSGLIGSEDHQQEVASKAEIYGETWYRSEVTVPLETLFNVYTGKVRTKHKLSFGSLAIPIWGMTFKKEELKHPKTEQEKHSLHFLGFKLPVSYVKEQTRESEEALRKYTKEEAVQEGIKLGKQDVEDKIGENGEVKSEKVLHQTVENGKVKLIILYQVIEDIVQTTPIVRETEE</sequence>
<evidence type="ECO:0000255" key="1"/>
<evidence type="ECO:0000305" key="2"/>
<reference key="1">
    <citation type="journal article" date="1996" name="Microbiology">
        <title>Systematic sequencing of the 283 kb 210 degrees-232 degrees region of the Bacillus subtilis genome containing the skin element and many sporulation genes.</title>
        <authorList>
            <person name="Mizuno M."/>
            <person name="Masuda S."/>
            <person name="Takemaru K."/>
            <person name="Hosono S."/>
            <person name="Sato T."/>
            <person name="Takeuchi M."/>
            <person name="Kobayashi Y."/>
        </authorList>
    </citation>
    <scope>NUCLEOTIDE SEQUENCE [GENOMIC DNA]</scope>
    <source>
        <strain>168 / JH642</strain>
    </source>
</reference>
<reference key="2">
    <citation type="journal article" date="1997" name="Nature">
        <title>The complete genome sequence of the Gram-positive bacterium Bacillus subtilis.</title>
        <authorList>
            <person name="Kunst F."/>
            <person name="Ogasawara N."/>
            <person name="Moszer I."/>
            <person name="Albertini A.M."/>
            <person name="Alloni G."/>
            <person name="Azevedo V."/>
            <person name="Bertero M.G."/>
            <person name="Bessieres P."/>
            <person name="Bolotin A."/>
            <person name="Borchert S."/>
            <person name="Borriss R."/>
            <person name="Boursier L."/>
            <person name="Brans A."/>
            <person name="Braun M."/>
            <person name="Brignell S.C."/>
            <person name="Bron S."/>
            <person name="Brouillet S."/>
            <person name="Bruschi C.V."/>
            <person name="Caldwell B."/>
            <person name="Capuano V."/>
            <person name="Carter N.M."/>
            <person name="Choi S.-K."/>
            <person name="Codani J.-J."/>
            <person name="Connerton I.F."/>
            <person name="Cummings N.J."/>
            <person name="Daniel R.A."/>
            <person name="Denizot F."/>
            <person name="Devine K.M."/>
            <person name="Duesterhoeft A."/>
            <person name="Ehrlich S.D."/>
            <person name="Emmerson P.T."/>
            <person name="Entian K.-D."/>
            <person name="Errington J."/>
            <person name="Fabret C."/>
            <person name="Ferrari E."/>
            <person name="Foulger D."/>
            <person name="Fritz C."/>
            <person name="Fujita M."/>
            <person name="Fujita Y."/>
            <person name="Fuma S."/>
            <person name="Galizzi A."/>
            <person name="Galleron N."/>
            <person name="Ghim S.-Y."/>
            <person name="Glaser P."/>
            <person name="Goffeau A."/>
            <person name="Golightly E.J."/>
            <person name="Grandi G."/>
            <person name="Guiseppi G."/>
            <person name="Guy B.J."/>
            <person name="Haga K."/>
            <person name="Haiech J."/>
            <person name="Harwood C.R."/>
            <person name="Henaut A."/>
            <person name="Hilbert H."/>
            <person name="Holsappel S."/>
            <person name="Hosono S."/>
            <person name="Hullo M.-F."/>
            <person name="Itaya M."/>
            <person name="Jones L.-M."/>
            <person name="Joris B."/>
            <person name="Karamata D."/>
            <person name="Kasahara Y."/>
            <person name="Klaerr-Blanchard M."/>
            <person name="Klein C."/>
            <person name="Kobayashi Y."/>
            <person name="Koetter P."/>
            <person name="Koningstein G."/>
            <person name="Krogh S."/>
            <person name="Kumano M."/>
            <person name="Kurita K."/>
            <person name="Lapidus A."/>
            <person name="Lardinois S."/>
            <person name="Lauber J."/>
            <person name="Lazarevic V."/>
            <person name="Lee S.-M."/>
            <person name="Levine A."/>
            <person name="Liu H."/>
            <person name="Masuda S."/>
            <person name="Mauel C."/>
            <person name="Medigue C."/>
            <person name="Medina N."/>
            <person name="Mellado R.P."/>
            <person name="Mizuno M."/>
            <person name="Moestl D."/>
            <person name="Nakai S."/>
            <person name="Noback M."/>
            <person name="Noone D."/>
            <person name="O'Reilly M."/>
            <person name="Ogawa K."/>
            <person name="Ogiwara A."/>
            <person name="Oudega B."/>
            <person name="Park S.-H."/>
            <person name="Parro V."/>
            <person name="Pohl T.M."/>
            <person name="Portetelle D."/>
            <person name="Porwollik S."/>
            <person name="Prescott A.M."/>
            <person name="Presecan E."/>
            <person name="Pujic P."/>
            <person name="Purnelle B."/>
            <person name="Rapoport G."/>
            <person name="Rey M."/>
            <person name="Reynolds S."/>
            <person name="Rieger M."/>
            <person name="Rivolta C."/>
            <person name="Rocha E."/>
            <person name="Roche B."/>
            <person name="Rose M."/>
            <person name="Sadaie Y."/>
            <person name="Sato T."/>
            <person name="Scanlan E."/>
            <person name="Schleich S."/>
            <person name="Schroeter R."/>
            <person name="Scoffone F."/>
            <person name="Sekiguchi J."/>
            <person name="Sekowska A."/>
            <person name="Seror S.J."/>
            <person name="Serror P."/>
            <person name="Shin B.-S."/>
            <person name="Soldo B."/>
            <person name="Sorokin A."/>
            <person name="Tacconi E."/>
            <person name="Takagi T."/>
            <person name="Takahashi H."/>
            <person name="Takemaru K."/>
            <person name="Takeuchi M."/>
            <person name="Tamakoshi A."/>
            <person name="Tanaka T."/>
            <person name="Terpstra P."/>
            <person name="Tognoni A."/>
            <person name="Tosato V."/>
            <person name="Uchiyama S."/>
            <person name="Vandenbol M."/>
            <person name="Vannier F."/>
            <person name="Vassarotti A."/>
            <person name="Viari A."/>
            <person name="Wambutt R."/>
            <person name="Wedler E."/>
            <person name="Wedler H."/>
            <person name="Weitzenegger T."/>
            <person name="Winters P."/>
            <person name="Wipat A."/>
            <person name="Yamamoto H."/>
            <person name="Yamane K."/>
            <person name="Yasumoto K."/>
            <person name="Yata K."/>
            <person name="Yoshida K."/>
            <person name="Yoshikawa H.-F."/>
            <person name="Zumstein E."/>
            <person name="Yoshikawa H."/>
            <person name="Danchin A."/>
        </authorList>
    </citation>
    <scope>NUCLEOTIDE SEQUENCE [LARGE SCALE GENOMIC DNA]</scope>
    <source>
        <strain>168</strain>
    </source>
</reference>
<reference key="3">
    <citation type="journal article" date="2009" name="Microbiology">
        <title>From a consortium sequence to a unified sequence: the Bacillus subtilis 168 reference genome a decade later.</title>
        <authorList>
            <person name="Barbe V."/>
            <person name="Cruveiller S."/>
            <person name="Kunst F."/>
            <person name="Lenoble P."/>
            <person name="Meurice G."/>
            <person name="Sekowska A."/>
            <person name="Vallenet D."/>
            <person name="Wang T."/>
            <person name="Moszer I."/>
            <person name="Medigue C."/>
            <person name="Danchin A."/>
        </authorList>
    </citation>
    <scope>SEQUENCE REVISION TO 31 AND 204</scope>
</reference>
<protein>
    <recommendedName>
        <fullName>Uncharacterized protein YqfD</fullName>
    </recommendedName>
</protein>
<feature type="chain" id="PRO_0000049796" description="Uncharacterized protein YqfD">
    <location>
        <begin position="1"/>
        <end position="398"/>
    </location>
</feature>
<feature type="transmembrane region" description="Helical" evidence="1">
    <location>
        <begin position="88"/>
        <end position="108"/>
    </location>
</feature>
<feature type="sequence conflict" description="In Ref. 1; BAA12476." evidence="2" ref="1">
    <original>R</original>
    <variation>K</variation>
    <location>
        <position position="31"/>
    </location>
</feature>
<feature type="sequence conflict" description="In Ref. 1; BAA12476." evidence="2" ref="1">
    <original>F</original>
    <variation>S</variation>
    <location>
        <position position="204"/>
    </location>
</feature>
<accession>P54469</accession>
<keyword id="KW-1003">Cell membrane</keyword>
<keyword id="KW-0472">Membrane</keyword>
<keyword id="KW-1185">Reference proteome</keyword>
<keyword id="KW-0749">Sporulation</keyword>
<keyword id="KW-0812">Transmembrane</keyword>
<keyword id="KW-1133">Transmembrane helix</keyword>
<organism>
    <name type="scientific">Bacillus subtilis (strain 168)</name>
    <dbReference type="NCBI Taxonomy" id="224308"/>
    <lineage>
        <taxon>Bacteria</taxon>
        <taxon>Bacillati</taxon>
        <taxon>Bacillota</taxon>
        <taxon>Bacilli</taxon>
        <taxon>Bacillales</taxon>
        <taxon>Bacillaceae</taxon>
        <taxon>Bacillus</taxon>
    </lineage>
</organism>
<dbReference type="EMBL" id="D84432">
    <property type="protein sequence ID" value="BAA12476.1"/>
    <property type="molecule type" value="Genomic_DNA"/>
</dbReference>
<dbReference type="EMBL" id="AL009126">
    <property type="protein sequence ID" value="CAB14477.2"/>
    <property type="molecule type" value="Genomic_DNA"/>
</dbReference>
<dbReference type="PIR" id="D69953">
    <property type="entry name" value="D69953"/>
</dbReference>
<dbReference type="RefSeq" id="NP_390413.2">
    <property type="nucleotide sequence ID" value="NC_000964.3"/>
</dbReference>
<dbReference type="RefSeq" id="WP_003230033.1">
    <property type="nucleotide sequence ID" value="NZ_OZ025638.1"/>
</dbReference>
<dbReference type="FunCoup" id="P54469">
    <property type="interactions" value="86"/>
</dbReference>
<dbReference type="STRING" id="224308.BSU25350"/>
<dbReference type="PaxDb" id="224308-BSU25350"/>
<dbReference type="EnsemblBacteria" id="CAB14477">
    <property type="protein sequence ID" value="CAB14477"/>
    <property type="gene ID" value="BSU_25350"/>
</dbReference>
<dbReference type="GeneID" id="937867"/>
<dbReference type="KEGG" id="bsu:BSU25350"/>
<dbReference type="PATRIC" id="fig|224308.179.peg.2756"/>
<dbReference type="eggNOG" id="COG0561">
    <property type="taxonomic scope" value="Bacteria"/>
</dbReference>
<dbReference type="InParanoid" id="P54469"/>
<dbReference type="OrthoDB" id="1640349at2"/>
<dbReference type="PhylomeDB" id="P54469"/>
<dbReference type="BioCyc" id="BSUB:BSU25350-MONOMER"/>
<dbReference type="Proteomes" id="UP000001570">
    <property type="component" value="Chromosome"/>
</dbReference>
<dbReference type="GO" id="GO:0005886">
    <property type="term" value="C:plasma membrane"/>
    <property type="evidence" value="ECO:0007669"/>
    <property type="project" value="UniProtKB-SubCell"/>
</dbReference>
<dbReference type="GO" id="GO:0030435">
    <property type="term" value="P:sporulation resulting in formation of a cellular spore"/>
    <property type="evidence" value="ECO:0007669"/>
    <property type="project" value="UniProtKB-KW"/>
</dbReference>
<dbReference type="InterPro" id="IPR010690">
    <property type="entry name" value="YqfD"/>
</dbReference>
<dbReference type="NCBIfam" id="TIGR02876">
    <property type="entry name" value="spore_yqfD"/>
    <property type="match status" value="1"/>
</dbReference>
<dbReference type="Pfam" id="PF06898">
    <property type="entry name" value="YqfD"/>
    <property type="match status" value="1"/>
</dbReference>
<dbReference type="PIRSF" id="PIRSF029895">
    <property type="entry name" value="SpoIV"/>
    <property type="match status" value="1"/>
</dbReference>
<name>YQFD_BACSU</name>
<comment type="subcellular location">
    <subcellularLocation>
        <location evidence="2">Cell membrane</location>
        <topology evidence="2">Single-pass membrane protein</topology>
    </subcellularLocation>
</comment>
<comment type="similarity">
    <text evidence="2">To B.megaterium SpoIV.</text>
</comment>
<gene>
    <name type="primary">yqfD</name>
    <name type="ordered locus">BSU25350</name>
</gene>